<name>EMTA_SALCH</name>
<protein>
    <recommendedName>
        <fullName evidence="1">Endo-type membrane-bound lytic murein transglycosylase A</fullName>
        <ecNumber evidence="1">4.2.2.n2</ecNumber>
    </recommendedName>
    <alternativeName>
        <fullName evidence="1">Peptidoglycan lytic endotransglycosylase</fullName>
    </alternativeName>
</protein>
<sequence>MKLRWFAFLVVILAGCSSKQDYRNPPWNAEVPVKRAMQWMPISEKAGAAWGVDPHLITAIIAIESGGNPNAVSKSNAIGLMQLKASTSGRDVYRRMGWRGEPTTSELKNPERNISMGAAYLSILENGPLAGIKDPQVMQYALVVSYANGAGALLRTFSSDRKKAIEKINDLDADEFFEHVVDNHPAPQAPRYIWKLQQALDAM</sequence>
<organism>
    <name type="scientific">Salmonella choleraesuis (strain SC-B67)</name>
    <dbReference type="NCBI Taxonomy" id="321314"/>
    <lineage>
        <taxon>Bacteria</taxon>
        <taxon>Pseudomonadati</taxon>
        <taxon>Pseudomonadota</taxon>
        <taxon>Gammaproteobacteria</taxon>
        <taxon>Enterobacterales</taxon>
        <taxon>Enterobacteriaceae</taxon>
        <taxon>Salmonella</taxon>
    </lineage>
</organism>
<proteinExistence type="inferred from homology"/>
<dbReference type="EC" id="4.2.2.n2" evidence="1"/>
<dbReference type="EMBL" id="AE017220">
    <property type="protein sequence ID" value="AAX65698.1"/>
    <property type="molecule type" value="Genomic_DNA"/>
</dbReference>
<dbReference type="RefSeq" id="WP_000776974.1">
    <property type="nucleotide sequence ID" value="NC_006905.1"/>
</dbReference>
<dbReference type="SMR" id="Q57NL3"/>
<dbReference type="CAZy" id="GH23">
    <property type="family name" value="Glycoside Hydrolase Family 23"/>
</dbReference>
<dbReference type="KEGG" id="sec:SCH_1792"/>
<dbReference type="HOGENOM" id="CLU_103257_0_0_6"/>
<dbReference type="Proteomes" id="UP000000538">
    <property type="component" value="Chromosome"/>
</dbReference>
<dbReference type="GO" id="GO:0009279">
    <property type="term" value="C:cell outer membrane"/>
    <property type="evidence" value="ECO:0007669"/>
    <property type="project" value="UniProtKB-SubCell"/>
</dbReference>
<dbReference type="GO" id="GO:0008932">
    <property type="term" value="F:lytic endotransglycosylase activity"/>
    <property type="evidence" value="ECO:0007669"/>
    <property type="project" value="InterPro"/>
</dbReference>
<dbReference type="GO" id="GO:0016998">
    <property type="term" value="P:cell wall macromolecule catabolic process"/>
    <property type="evidence" value="ECO:0007669"/>
    <property type="project" value="UniProtKB-UniRule"/>
</dbReference>
<dbReference type="GO" id="GO:0071555">
    <property type="term" value="P:cell wall organization"/>
    <property type="evidence" value="ECO:0007669"/>
    <property type="project" value="UniProtKB-KW"/>
</dbReference>
<dbReference type="GO" id="GO:0000270">
    <property type="term" value="P:peptidoglycan metabolic process"/>
    <property type="evidence" value="ECO:0007669"/>
    <property type="project" value="InterPro"/>
</dbReference>
<dbReference type="CDD" id="cd16893">
    <property type="entry name" value="LT_MltC_MltE"/>
    <property type="match status" value="1"/>
</dbReference>
<dbReference type="Gene3D" id="1.10.530.10">
    <property type="match status" value="1"/>
</dbReference>
<dbReference type="HAMAP" id="MF_01381">
    <property type="entry name" value="EmtA"/>
    <property type="match status" value="1"/>
</dbReference>
<dbReference type="InterPro" id="IPR023946">
    <property type="entry name" value="EmtA"/>
</dbReference>
<dbReference type="InterPro" id="IPR023346">
    <property type="entry name" value="Lysozyme-like_dom_sf"/>
</dbReference>
<dbReference type="InterPro" id="IPR000189">
    <property type="entry name" value="Transglyc_AS"/>
</dbReference>
<dbReference type="InterPro" id="IPR008258">
    <property type="entry name" value="Transglycosylase_SLT_dom_1"/>
</dbReference>
<dbReference type="NCBIfam" id="NF012014">
    <property type="entry name" value="PRK15470.1"/>
    <property type="match status" value="1"/>
</dbReference>
<dbReference type="PANTHER" id="PTHR37423:SF4">
    <property type="entry name" value="ENDO-TYPE MEMBRANE-BOUND LYTIC MUREIN TRANSGLYCOSYLASE A"/>
    <property type="match status" value="1"/>
</dbReference>
<dbReference type="PANTHER" id="PTHR37423">
    <property type="entry name" value="SOLUBLE LYTIC MUREIN TRANSGLYCOSYLASE-RELATED"/>
    <property type="match status" value="1"/>
</dbReference>
<dbReference type="Pfam" id="PF01464">
    <property type="entry name" value="SLT"/>
    <property type="match status" value="1"/>
</dbReference>
<dbReference type="SUPFAM" id="SSF53955">
    <property type="entry name" value="Lysozyme-like"/>
    <property type="match status" value="1"/>
</dbReference>
<dbReference type="PROSITE" id="PS51257">
    <property type="entry name" value="PROKAR_LIPOPROTEIN"/>
    <property type="match status" value="1"/>
</dbReference>
<dbReference type="PROSITE" id="PS00922">
    <property type="entry name" value="TRANSGLYCOSYLASE"/>
    <property type="match status" value="1"/>
</dbReference>
<accession>Q57NL3</accession>
<keyword id="KW-0998">Cell outer membrane</keyword>
<keyword id="KW-0961">Cell wall biogenesis/degradation</keyword>
<keyword id="KW-0449">Lipoprotein</keyword>
<keyword id="KW-0456">Lyase</keyword>
<keyword id="KW-0472">Membrane</keyword>
<keyword id="KW-0564">Palmitate</keyword>
<keyword id="KW-0732">Signal</keyword>
<gene>
    <name evidence="1" type="primary">emtA</name>
    <name type="ordered locus">SCH_1792</name>
</gene>
<comment type="function">
    <text evidence="1">Murein-degrading enzyme. May play a role in recycling of muropeptides during cell elongation and/or cell division. Preferentially cleaves at a distance of more than two disaccharide units from the ends of the glycan chain.</text>
</comment>
<comment type="catalytic activity">
    <reaction evidence="1">
        <text>Endolytic cleavage of the (1-&gt;4)-beta-glycosidic linkage between N-acetylmuramic acid (MurNAc) and N-acetylglucosamine (GlcNAc) residues in peptidoglycan with concomitant formation of a 1,6-anhydrobond in the MurNAc residue.</text>
        <dbReference type="EC" id="4.2.2.n2"/>
    </reaction>
</comment>
<comment type="subcellular location">
    <subcellularLocation>
        <location evidence="1">Cell outer membrane</location>
        <topology evidence="1">Lipid-anchor</topology>
    </subcellularLocation>
</comment>
<comment type="similarity">
    <text evidence="1">Belongs to the transglycosylase Slt family.</text>
</comment>
<feature type="signal peptide" evidence="1">
    <location>
        <begin position="1"/>
        <end position="15"/>
    </location>
</feature>
<feature type="chain" id="PRO_0000312910" description="Endo-type membrane-bound lytic murein transglycosylase A">
    <location>
        <begin position="16"/>
        <end position="203"/>
    </location>
</feature>
<feature type="lipid moiety-binding region" description="N-palmitoyl cysteine" evidence="1">
    <location>
        <position position="16"/>
    </location>
</feature>
<feature type="lipid moiety-binding region" description="S-diacylglycerol cysteine" evidence="1">
    <location>
        <position position="16"/>
    </location>
</feature>
<reference key="1">
    <citation type="journal article" date="2005" name="Nucleic Acids Res.">
        <title>The genome sequence of Salmonella enterica serovar Choleraesuis, a highly invasive and resistant zoonotic pathogen.</title>
        <authorList>
            <person name="Chiu C.-H."/>
            <person name="Tang P."/>
            <person name="Chu C."/>
            <person name="Hu S."/>
            <person name="Bao Q."/>
            <person name="Yu J."/>
            <person name="Chou Y.-Y."/>
            <person name="Wang H.-S."/>
            <person name="Lee Y.-S."/>
        </authorList>
    </citation>
    <scope>NUCLEOTIDE SEQUENCE [LARGE SCALE GENOMIC DNA]</scope>
    <source>
        <strain>SC-B67</strain>
    </source>
</reference>
<evidence type="ECO:0000255" key="1">
    <source>
        <dbReference type="HAMAP-Rule" id="MF_01381"/>
    </source>
</evidence>